<organism>
    <name type="scientific">Pseudomonas paraeruginosa (strain DSM 24068 / PA7)</name>
    <name type="common">Pseudomonas aeruginosa (strain PA7)</name>
    <dbReference type="NCBI Taxonomy" id="381754"/>
    <lineage>
        <taxon>Bacteria</taxon>
        <taxon>Pseudomonadati</taxon>
        <taxon>Pseudomonadota</taxon>
        <taxon>Gammaproteobacteria</taxon>
        <taxon>Pseudomonadales</taxon>
        <taxon>Pseudomonadaceae</taxon>
        <taxon>Pseudomonas</taxon>
        <taxon>Pseudomonas paraeruginosa</taxon>
    </lineage>
</organism>
<gene>
    <name evidence="1" type="primary">pdxJ</name>
    <name type="ordered locus">PSPA7_4746</name>
</gene>
<name>PDXJ_PSEP7</name>
<evidence type="ECO:0000255" key="1">
    <source>
        <dbReference type="HAMAP-Rule" id="MF_00279"/>
    </source>
</evidence>
<dbReference type="EC" id="2.6.99.2" evidence="1"/>
<dbReference type="EMBL" id="CP000744">
    <property type="protein sequence ID" value="ABR83942.1"/>
    <property type="molecule type" value="Genomic_DNA"/>
</dbReference>
<dbReference type="RefSeq" id="WP_003150225.1">
    <property type="nucleotide sequence ID" value="NC_009656.1"/>
</dbReference>
<dbReference type="SMR" id="A6VAK3"/>
<dbReference type="KEGG" id="pap:PSPA7_4746"/>
<dbReference type="HOGENOM" id="CLU_074563_0_0_6"/>
<dbReference type="UniPathway" id="UPA00244">
    <property type="reaction ID" value="UER00313"/>
</dbReference>
<dbReference type="Proteomes" id="UP000001582">
    <property type="component" value="Chromosome"/>
</dbReference>
<dbReference type="GO" id="GO:0005829">
    <property type="term" value="C:cytosol"/>
    <property type="evidence" value="ECO:0007669"/>
    <property type="project" value="TreeGrafter"/>
</dbReference>
<dbReference type="GO" id="GO:0033856">
    <property type="term" value="F:pyridoxine 5'-phosphate synthase activity"/>
    <property type="evidence" value="ECO:0007669"/>
    <property type="project" value="UniProtKB-EC"/>
</dbReference>
<dbReference type="GO" id="GO:0008615">
    <property type="term" value="P:pyridoxine biosynthetic process"/>
    <property type="evidence" value="ECO:0007669"/>
    <property type="project" value="UniProtKB-UniRule"/>
</dbReference>
<dbReference type="CDD" id="cd00003">
    <property type="entry name" value="PNPsynthase"/>
    <property type="match status" value="1"/>
</dbReference>
<dbReference type="FunFam" id="3.20.20.70:FF:000042">
    <property type="entry name" value="Pyridoxine 5'-phosphate synthase"/>
    <property type="match status" value="1"/>
</dbReference>
<dbReference type="Gene3D" id="3.20.20.70">
    <property type="entry name" value="Aldolase class I"/>
    <property type="match status" value="1"/>
</dbReference>
<dbReference type="HAMAP" id="MF_00279">
    <property type="entry name" value="PdxJ"/>
    <property type="match status" value="1"/>
</dbReference>
<dbReference type="InterPro" id="IPR013785">
    <property type="entry name" value="Aldolase_TIM"/>
</dbReference>
<dbReference type="InterPro" id="IPR004569">
    <property type="entry name" value="PyrdxlP_synth_PdxJ"/>
</dbReference>
<dbReference type="InterPro" id="IPR036130">
    <property type="entry name" value="Pyridoxine-5'_phos_synth"/>
</dbReference>
<dbReference type="NCBIfam" id="TIGR00559">
    <property type="entry name" value="pdxJ"/>
    <property type="match status" value="1"/>
</dbReference>
<dbReference type="NCBIfam" id="NF003623">
    <property type="entry name" value="PRK05265.1-1"/>
    <property type="match status" value="1"/>
</dbReference>
<dbReference type="NCBIfam" id="NF003625">
    <property type="entry name" value="PRK05265.1-3"/>
    <property type="match status" value="1"/>
</dbReference>
<dbReference type="NCBIfam" id="NF003627">
    <property type="entry name" value="PRK05265.1-5"/>
    <property type="match status" value="1"/>
</dbReference>
<dbReference type="PANTHER" id="PTHR30456">
    <property type="entry name" value="PYRIDOXINE 5'-PHOSPHATE SYNTHASE"/>
    <property type="match status" value="1"/>
</dbReference>
<dbReference type="PANTHER" id="PTHR30456:SF0">
    <property type="entry name" value="PYRIDOXINE 5'-PHOSPHATE SYNTHASE"/>
    <property type="match status" value="1"/>
</dbReference>
<dbReference type="Pfam" id="PF03740">
    <property type="entry name" value="PdxJ"/>
    <property type="match status" value="1"/>
</dbReference>
<dbReference type="SUPFAM" id="SSF63892">
    <property type="entry name" value="Pyridoxine 5'-phosphate synthase"/>
    <property type="match status" value="1"/>
</dbReference>
<reference key="1">
    <citation type="submission" date="2007-06" db="EMBL/GenBank/DDBJ databases">
        <authorList>
            <person name="Dodson R.J."/>
            <person name="Harkins D."/>
            <person name="Paulsen I.T."/>
        </authorList>
    </citation>
    <scope>NUCLEOTIDE SEQUENCE [LARGE SCALE GENOMIC DNA]</scope>
    <source>
        <strain>DSM 24068 / PA7</strain>
    </source>
</reference>
<sequence length="248" mass="27203">MTEATRILLGVNIDHVATLRQARGTRYPDPVKAALDAEEAGADGITVHLREDRRHIQERDVRMLKEVLQTRMNFEMGVTEEMLAFAEEIRPAHSCLVPERREELTTEGGLDVAGQEQRIRDAVRRLAAVGSEVSLFIDPDPRQIEASARVGAPAIELHTGRYADAENPGEQARELQRVREGVALGRSLGLIVNAGHGLHYHNVEPVAAIEGINELNIGHAIVAHALFVGFRQAVAEMKALMLAAAAKR</sequence>
<comment type="function">
    <text evidence="1">Catalyzes the complicated ring closure reaction between the two acyclic compounds 1-deoxy-D-xylulose-5-phosphate (DXP) and 3-amino-2-oxopropyl phosphate (1-amino-acetone-3-phosphate or AAP) to form pyridoxine 5'-phosphate (PNP) and inorganic phosphate.</text>
</comment>
<comment type="catalytic activity">
    <reaction evidence="1">
        <text>3-amino-2-oxopropyl phosphate + 1-deoxy-D-xylulose 5-phosphate = pyridoxine 5'-phosphate + phosphate + 2 H2O + H(+)</text>
        <dbReference type="Rhea" id="RHEA:15265"/>
        <dbReference type="ChEBI" id="CHEBI:15377"/>
        <dbReference type="ChEBI" id="CHEBI:15378"/>
        <dbReference type="ChEBI" id="CHEBI:43474"/>
        <dbReference type="ChEBI" id="CHEBI:57279"/>
        <dbReference type="ChEBI" id="CHEBI:57792"/>
        <dbReference type="ChEBI" id="CHEBI:58589"/>
        <dbReference type="EC" id="2.6.99.2"/>
    </reaction>
</comment>
<comment type="pathway">
    <text evidence="1">Cofactor biosynthesis; pyridoxine 5'-phosphate biosynthesis; pyridoxine 5'-phosphate from D-erythrose 4-phosphate: step 5/5.</text>
</comment>
<comment type="subunit">
    <text evidence="1">Homooctamer; tetramer of dimers.</text>
</comment>
<comment type="subcellular location">
    <subcellularLocation>
        <location evidence="1">Cytoplasm</location>
    </subcellularLocation>
</comment>
<comment type="similarity">
    <text evidence="1">Belongs to the PNP synthase family.</text>
</comment>
<protein>
    <recommendedName>
        <fullName evidence="1">Pyridoxine 5'-phosphate synthase</fullName>
        <shortName evidence="1">PNP synthase</shortName>
        <ecNumber evidence="1">2.6.99.2</ecNumber>
    </recommendedName>
</protein>
<feature type="chain" id="PRO_1000022390" description="Pyridoxine 5'-phosphate synthase">
    <location>
        <begin position="1"/>
        <end position="248"/>
    </location>
</feature>
<feature type="active site" description="Proton acceptor" evidence="1">
    <location>
        <position position="48"/>
    </location>
</feature>
<feature type="active site" description="Proton acceptor" evidence="1">
    <location>
        <position position="75"/>
    </location>
</feature>
<feature type="active site" description="Proton donor" evidence="1">
    <location>
        <position position="196"/>
    </location>
</feature>
<feature type="binding site" evidence="1">
    <location>
        <position position="12"/>
    </location>
    <ligand>
        <name>3-amino-2-oxopropyl phosphate</name>
        <dbReference type="ChEBI" id="CHEBI:57279"/>
    </ligand>
</feature>
<feature type="binding site" evidence="1">
    <location>
        <begin position="14"/>
        <end position="15"/>
    </location>
    <ligand>
        <name>1-deoxy-D-xylulose 5-phosphate</name>
        <dbReference type="ChEBI" id="CHEBI:57792"/>
    </ligand>
</feature>
<feature type="binding site" evidence="1">
    <location>
        <position position="23"/>
    </location>
    <ligand>
        <name>3-amino-2-oxopropyl phosphate</name>
        <dbReference type="ChEBI" id="CHEBI:57279"/>
    </ligand>
</feature>
<feature type="binding site" evidence="1">
    <location>
        <position position="50"/>
    </location>
    <ligand>
        <name>1-deoxy-D-xylulose 5-phosphate</name>
        <dbReference type="ChEBI" id="CHEBI:57792"/>
    </ligand>
</feature>
<feature type="binding site" evidence="1">
    <location>
        <position position="55"/>
    </location>
    <ligand>
        <name>1-deoxy-D-xylulose 5-phosphate</name>
        <dbReference type="ChEBI" id="CHEBI:57792"/>
    </ligand>
</feature>
<feature type="binding site" evidence="1">
    <location>
        <position position="105"/>
    </location>
    <ligand>
        <name>1-deoxy-D-xylulose 5-phosphate</name>
        <dbReference type="ChEBI" id="CHEBI:57792"/>
    </ligand>
</feature>
<feature type="binding site" evidence="1">
    <location>
        <position position="197"/>
    </location>
    <ligand>
        <name>3-amino-2-oxopropyl phosphate</name>
        <dbReference type="ChEBI" id="CHEBI:57279"/>
    </ligand>
</feature>
<feature type="binding site" evidence="1">
    <location>
        <begin position="218"/>
        <end position="219"/>
    </location>
    <ligand>
        <name>3-amino-2-oxopropyl phosphate</name>
        <dbReference type="ChEBI" id="CHEBI:57279"/>
    </ligand>
</feature>
<feature type="site" description="Transition state stabilizer" evidence="1">
    <location>
        <position position="156"/>
    </location>
</feature>
<keyword id="KW-0963">Cytoplasm</keyword>
<keyword id="KW-0664">Pyridoxine biosynthesis</keyword>
<keyword id="KW-0808">Transferase</keyword>
<accession>A6VAK3</accession>
<proteinExistence type="inferred from homology"/>